<comment type="function">
    <text evidence="6">Activity unknown, even that a lot of targets (Kv, Nav, Cav) have been tested and activities on insects and mice have been tested.</text>
</comment>
<comment type="subcellular location">
    <subcellularLocation>
        <location evidence="2">Secreted</location>
    </subcellularLocation>
</comment>
<comment type="tissue specificity">
    <text evidence="5">Expressed by the venom gland.</text>
</comment>
<comment type="domain">
    <text evidence="2">Has the structural arrangement of an alpha-helix connected to a beta-sheet by disulfide bonds (CS-alpha/beta). Since the toxin contains only 2 disulfide bonds, it is called 2ds-CSalpha/beta.</text>
</comment>
<comment type="miscellaneous">
    <text evidence="2">Negative results: does not show antimicrobial and ion channel inhbibitory activities. Antimicrobial activity was tested against five bacteria and two fungi, including four Gram-negative bactersoia (E.coli, P.aeruginosa, A.baumannii, and K.pneumoniae), one Gram-positive bacterium (S.aureus), and the fungi C.albicans and C.neoformans (tested at 32 mg/mL). Ion channel inhibitory activity was tested against 16 voltage-gated potassium channels (Kv) (Kv1.1- Kv1.6, Kv2.1, Kv3.1, Kv4.2, Kv7.1-7.2, Kv7.4-7.5, Kv10.1, Kv11.1, and Shaker IR), 9 voltage-gated sodium channels (Nav) (Nav1.1-Nav1.8, BgNav1, and VdNav1), two voltage-gated calcium channels (Cav) (Cav1, Cav2.2), and two nicotinic acetylcholine receptors (nAChR) (alpha-7 nAChR, alpha-3-beta-2/alpha-3-beta-4 nAChR) (tested at 10 uM). In addition, the toxin does not show activity on trigeminal ganglia (500 ug tested) as well as on insects and on mice (absence of flinching or licking).</text>
</comment>
<comment type="similarity">
    <text evidence="4">Belongs to the scoloptoxin-15 family.</text>
</comment>
<comment type="caution">
    <text evidence="5">All S.morsitans family members described in 'Undeheim et al., 2014' have not been imported into UniProtKB. Please, refer to this paper to access them.</text>
</comment>
<comment type="online information" name="National Center for Biotechnology Information (NCBI)">
    <link uri="https://www.ncbi.nlm.nih.gov/nuccore/GASH01000152"/>
</comment>
<comment type="online information" name="Biological Magnetic Resonance Data Bank">
    <link uri="https://bmrb.io/data_library/summary/index.php?bmrbId=30372"/>
</comment>
<protein>
    <recommendedName>
        <fullName evidence="3">U-scoloptoxin(15)-Sm2a</fullName>
        <shortName evidence="3">U-SLPTX(15)-Sm2a</shortName>
    </recommendedName>
</protein>
<accession>P0DPT5</accession>
<organism>
    <name type="scientific">Scolopendra morsitans</name>
    <name type="common">Tanzanian blue ringleg centipede</name>
    <dbReference type="NCBI Taxonomy" id="943129"/>
    <lineage>
        <taxon>Eukaryota</taxon>
        <taxon>Metazoa</taxon>
        <taxon>Ecdysozoa</taxon>
        <taxon>Arthropoda</taxon>
        <taxon>Myriapoda</taxon>
        <taxon>Chilopoda</taxon>
        <taxon>Pleurostigmophora</taxon>
        <taxon>Scolopendromorpha</taxon>
        <taxon>Scolopendridae</taxon>
        <taxon>Scolopendra</taxon>
    </lineage>
</organism>
<keyword id="KW-0002">3D-structure</keyword>
<keyword id="KW-1015">Disulfide bond</keyword>
<keyword id="KW-0964">Secreted</keyword>
<keyword id="KW-0732">Signal</keyword>
<keyword id="KW-0800">Toxin</keyword>
<evidence type="ECO:0000255" key="1"/>
<evidence type="ECO:0000269" key="2">
    <source>
    </source>
</evidence>
<evidence type="ECO:0000303" key="3">
    <source>
    </source>
</evidence>
<evidence type="ECO:0000305" key="4"/>
<evidence type="ECO:0000305" key="5">
    <source>
    </source>
</evidence>
<evidence type="ECO:0000305" key="6">
    <source>
    </source>
</evidence>
<evidence type="ECO:0000312" key="7">
    <source>
        <dbReference type="PDB" id="6BL9"/>
    </source>
</evidence>
<proteinExistence type="evidence at protein level"/>
<reference key="1">
    <citation type="journal article" date="2014" name="Mol. Biol. Evol.">
        <title>Clawing through evolution: toxin diversification and convergence in the ancient lineage Chilopoda (centipedes).</title>
        <authorList>
            <person name="Undheim E.A."/>
            <person name="Jones A."/>
            <person name="Clauser K.R."/>
            <person name="Holland J.W."/>
            <person name="Pineda S.S."/>
            <person name="King G.F."/>
            <person name="Fry B.G."/>
        </authorList>
    </citation>
    <scope>NUCLEOTIDE SEQUENCE [MRNA]</scope>
    <scope>NOMENCLATURE</scope>
    <source>
        <tissue>Venom gland</tissue>
    </source>
</reference>
<reference key="2">
    <citation type="journal article" date="2018" name="Structure">
        <title>A centipede toxin family defines an ancient class of CSalphabeta defensins.</title>
        <authorList>
            <person name="Dash T.S."/>
            <person name="Shafee T."/>
            <person name="Harvey P.J."/>
            <person name="Zhang C."/>
            <person name="Peigneur S."/>
            <person name="Deuis J.R."/>
            <person name="Vetter I."/>
            <person name="Tytgat J."/>
            <person name="Anderson M.A."/>
            <person name="Craik D.J."/>
            <person name="Durek T."/>
            <person name="Undheim E.A.B."/>
        </authorList>
    </citation>
    <scope>STRUCTURE BY NMR OF 21-73</scope>
    <scope>SYNTHESIS OF 21-73</scope>
    <scope>IDENTIFICATION BY MASS SPECTROMETRY</scope>
    <scope>DISULFIDE BOND</scope>
    <scope>BIOASSAY</scope>
    <scope>SUBCELLULAR LOCATION</scope>
    <source>
        <tissue>Venom</tissue>
    </source>
</reference>
<sequence>MKFYIVFCLFVVLLINFAAAEETEEPIRHAKKNPSEGECKKACADAFANGDQSKIAKAENFKDYYCNCHIIIH</sequence>
<feature type="signal peptide" evidence="1">
    <location>
        <begin position="1"/>
        <end position="20"/>
    </location>
</feature>
<feature type="chain" id="PRO_0000446794" description="U-scoloptoxin(15)-Sm2a" evidence="6">
    <location>
        <begin position="21"/>
        <end position="73"/>
    </location>
</feature>
<feature type="disulfide bond" evidence="2 7">
    <location>
        <begin position="39"/>
        <end position="66"/>
    </location>
</feature>
<feature type="disulfide bond" evidence="2 7">
    <location>
        <begin position="43"/>
        <end position="68"/>
    </location>
</feature>
<dbReference type="PDB" id="6BL9">
    <property type="method" value="NMR"/>
    <property type="chains" value="A=1-53"/>
</dbReference>
<dbReference type="PDBsum" id="6BL9"/>
<dbReference type="SMR" id="P0DPT5"/>
<dbReference type="GO" id="GO:0005576">
    <property type="term" value="C:extracellular region"/>
    <property type="evidence" value="ECO:0007669"/>
    <property type="project" value="UniProtKB-SubCell"/>
</dbReference>
<dbReference type="GO" id="GO:0090729">
    <property type="term" value="F:toxin activity"/>
    <property type="evidence" value="ECO:0007669"/>
    <property type="project" value="UniProtKB-KW"/>
</dbReference>
<name>TXF2A_SCOMO</name>